<reference key="1">
    <citation type="journal article" date="2004" name="J. Mol. Evol.">
        <title>Comparative analysis of the complete plastid genome sequence of the red alga Gracilaria tenuistipitata var. liui provides insights into the evolution of rhodoplasts and their relationship to other plastids.</title>
        <authorList>
            <person name="Hagopian J.C."/>
            <person name="Reis M."/>
            <person name="Kitajima J.P."/>
            <person name="Bhattacharya D."/>
            <person name="de Oliveira M.C."/>
        </authorList>
    </citation>
    <scope>NUCLEOTIDE SEQUENCE [LARGE SCALE GENOMIC DNA]</scope>
</reference>
<protein>
    <recommendedName>
        <fullName evidence="2">Cytochrome b6-f complex subunit 4</fullName>
    </recommendedName>
    <alternativeName>
        <fullName evidence="2">17 kDa polypeptide</fullName>
    </alternativeName>
</protein>
<sequence length="160" mass="17475">MSIIKKPDLTDPKLRAKLAKGMGHHYYGEPAWPNDILYMFPVVILGILACDVGLSILEPSVIGEPANPFATPLEILPEWYFFPTFNLLRVIPNKLVGVLSMASVPAGLITVPFIESVNKFQNPFRRPIATSVFLVGTIVAVWLGIGATMPLSKAITLGLF</sequence>
<evidence type="ECO:0000250" key="1"/>
<evidence type="ECO:0000255" key="2">
    <source>
        <dbReference type="HAMAP-Rule" id="MF_01344"/>
    </source>
</evidence>
<dbReference type="EMBL" id="AY673996">
    <property type="protein sequence ID" value="AAT79631.1"/>
    <property type="molecule type" value="Genomic_DNA"/>
</dbReference>
<dbReference type="RefSeq" id="YP_063556.1">
    <property type="nucleotide sequence ID" value="NC_006137.1"/>
</dbReference>
<dbReference type="SMR" id="Q6B904"/>
<dbReference type="GeneID" id="2944033"/>
<dbReference type="GO" id="GO:0009535">
    <property type="term" value="C:chloroplast thylakoid membrane"/>
    <property type="evidence" value="ECO:0007669"/>
    <property type="project" value="UniProtKB-SubCell"/>
</dbReference>
<dbReference type="GO" id="GO:0045158">
    <property type="term" value="F:electron transporter, transferring electrons within cytochrome b6/f complex of photosystem II activity"/>
    <property type="evidence" value="ECO:0007669"/>
    <property type="project" value="UniProtKB-UniRule"/>
</dbReference>
<dbReference type="GO" id="GO:0045156">
    <property type="term" value="F:electron transporter, transferring electrons within the cyclic electron transport pathway of photosynthesis activity"/>
    <property type="evidence" value="ECO:0007669"/>
    <property type="project" value="InterPro"/>
</dbReference>
<dbReference type="GO" id="GO:0016491">
    <property type="term" value="F:oxidoreductase activity"/>
    <property type="evidence" value="ECO:0007669"/>
    <property type="project" value="InterPro"/>
</dbReference>
<dbReference type="GO" id="GO:0009767">
    <property type="term" value="P:photosynthetic electron transport chain"/>
    <property type="evidence" value="ECO:0007669"/>
    <property type="project" value="InterPro"/>
</dbReference>
<dbReference type="CDD" id="cd00290">
    <property type="entry name" value="cytochrome_b_C"/>
    <property type="match status" value="1"/>
</dbReference>
<dbReference type="FunFam" id="1.10.287.980:FF:000001">
    <property type="entry name" value="Cytochrome b6-f complex subunit 4"/>
    <property type="match status" value="1"/>
</dbReference>
<dbReference type="FunFam" id="1.20.5.510:FF:000002">
    <property type="entry name" value="Cytochrome b6-f complex subunit 4"/>
    <property type="match status" value="1"/>
</dbReference>
<dbReference type="Gene3D" id="1.10.287.980">
    <property type="entry name" value="plastocyanin oxidoreductase"/>
    <property type="match status" value="1"/>
</dbReference>
<dbReference type="Gene3D" id="1.20.5.510">
    <property type="entry name" value="Single helix bin"/>
    <property type="match status" value="1"/>
</dbReference>
<dbReference type="HAMAP" id="MF_01344">
    <property type="entry name" value="Cytb6_f_subIV"/>
    <property type="match status" value="1"/>
</dbReference>
<dbReference type="InterPro" id="IPR005798">
    <property type="entry name" value="Cyt_b/b6_C"/>
</dbReference>
<dbReference type="InterPro" id="IPR036150">
    <property type="entry name" value="Cyt_b/b6_C_sf"/>
</dbReference>
<dbReference type="InterPro" id="IPR005870">
    <property type="entry name" value="Cyt_b6/f_cplx_suIV"/>
</dbReference>
<dbReference type="InterPro" id="IPR048260">
    <property type="entry name" value="Cytochrome_b_C_euk/bac"/>
</dbReference>
<dbReference type="NCBIfam" id="TIGR01156">
    <property type="entry name" value="cytb6_f_IV"/>
    <property type="match status" value="1"/>
</dbReference>
<dbReference type="PANTHER" id="PTHR19271">
    <property type="entry name" value="CYTOCHROME B"/>
    <property type="match status" value="1"/>
</dbReference>
<dbReference type="PANTHER" id="PTHR19271:SF16">
    <property type="entry name" value="CYTOCHROME B"/>
    <property type="match status" value="1"/>
</dbReference>
<dbReference type="Pfam" id="PF00032">
    <property type="entry name" value="Cytochrom_B_C"/>
    <property type="match status" value="1"/>
</dbReference>
<dbReference type="PIRSF" id="PIRSF000033">
    <property type="entry name" value="B6f_17K"/>
    <property type="match status" value="1"/>
</dbReference>
<dbReference type="SUPFAM" id="SSF81648">
    <property type="entry name" value="a domain/subunit of cytochrome bc1 complex (Ubiquinol-cytochrome c reductase)"/>
    <property type="match status" value="1"/>
</dbReference>
<dbReference type="PROSITE" id="PS51003">
    <property type="entry name" value="CYTB_CTER"/>
    <property type="match status" value="1"/>
</dbReference>
<geneLocation type="chloroplast"/>
<feature type="chain" id="PRO_0000061861" description="Cytochrome b6-f complex subunit 4">
    <location>
        <begin position="1"/>
        <end position="160"/>
    </location>
</feature>
<feature type="transmembrane region" description="Helical" evidence="2">
    <location>
        <begin position="36"/>
        <end position="56"/>
    </location>
</feature>
<feature type="transmembrane region" description="Helical" evidence="2">
    <location>
        <begin position="95"/>
        <end position="115"/>
    </location>
</feature>
<feature type="transmembrane region" description="Helical" evidence="2">
    <location>
        <begin position="127"/>
        <end position="147"/>
    </location>
</feature>
<proteinExistence type="inferred from homology"/>
<name>PETD_GRATL</name>
<comment type="function">
    <text evidence="2">Component of the cytochrome b6-f complex, which mediates electron transfer between photosystem II (PSII) and photosystem I (PSI), cyclic electron flow around PSI, and state transitions.</text>
</comment>
<comment type="subunit">
    <text evidence="1">The 4 large subunits of the cytochrome b6-f complex are cytochrome b6, subunit IV (17 kDa polypeptide, petD), cytochrome f and the Rieske protein, while the 4 small subunits are petG, petL, petM and petN. The complex functions as a dimer (By similarity).</text>
</comment>
<comment type="subcellular location">
    <subcellularLocation>
        <location evidence="2">Plastid</location>
        <location evidence="2">Chloroplast thylakoid membrane</location>
        <topology evidence="2">Multi-pass membrane protein</topology>
    </subcellularLocation>
</comment>
<comment type="similarity">
    <text evidence="2">Belongs to the cytochrome b family. PetD subfamily.</text>
</comment>
<keyword id="KW-0150">Chloroplast</keyword>
<keyword id="KW-0249">Electron transport</keyword>
<keyword id="KW-0472">Membrane</keyword>
<keyword id="KW-0602">Photosynthesis</keyword>
<keyword id="KW-0934">Plastid</keyword>
<keyword id="KW-0793">Thylakoid</keyword>
<keyword id="KW-0812">Transmembrane</keyword>
<keyword id="KW-1133">Transmembrane helix</keyword>
<keyword id="KW-0813">Transport</keyword>
<accession>Q6B904</accession>
<gene>
    <name evidence="2" type="primary">petD</name>
    <name type="ordered locus">Grc000050</name>
</gene>
<organism>
    <name type="scientific">Gracilaria tenuistipitata var. liui</name>
    <name type="common">Red alga</name>
    <dbReference type="NCBI Taxonomy" id="285951"/>
    <lineage>
        <taxon>Eukaryota</taxon>
        <taxon>Rhodophyta</taxon>
        <taxon>Florideophyceae</taxon>
        <taxon>Rhodymeniophycidae</taxon>
        <taxon>Gracilariales</taxon>
        <taxon>Gracilariaceae</taxon>
        <taxon>Gracilaria</taxon>
        <taxon>Gracilaria tenuistipitata</taxon>
    </lineage>
</organism>